<protein>
    <recommendedName>
        <fullName evidence="2">Peptide chain release factor 2</fullName>
        <shortName evidence="2">RF-2</shortName>
    </recommendedName>
</protein>
<organism>
    <name type="scientific">Staphylococcus haemolyticus (strain JCSC1435)</name>
    <dbReference type="NCBI Taxonomy" id="279808"/>
    <lineage>
        <taxon>Bacteria</taxon>
        <taxon>Bacillati</taxon>
        <taxon>Bacillota</taxon>
        <taxon>Bacilli</taxon>
        <taxon>Bacillales</taxon>
        <taxon>Staphylococcaceae</taxon>
        <taxon>Staphylococcus</taxon>
    </lineage>
</organism>
<comment type="function">
    <text evidence="2">Peptide chain release factor 2 directs the termination of translation in response to the peptide chain termination codons UGA and UAA.</text>
</comment>
<comment type="subcellular location">
    <subcellularLocation>
        <location evidence="2">Cytoplasm</location>
    </subcellularLocation>
</comment>
<comment type="PTM">
    <text evidence="2">Methylated by PrmC. Methylation increases the termination efficiency of RF2.</text>
</comment>
<comment type="miscellaneous">
    <text evidence="1">The gene for this protein contains a UGA in-frame termination codon after Leu-24; a naturally occurring frameshift enables complete translation of RF-2. This provides a mechanism for the protein to regulate its own production (By similarity).</text>
</comment>
<comment type="similarity">
    <text evidence="2">Belongs to the prokaryotic/mitochondrial release factor family.</text>
</comment>
<feature type="chain" id="PRO_0000249577" description="Peptide chain release factor 2">
    <location>
        <begin position="1"/>
        <end position="371"/>
    </location>
</feature>
<feature type="modified residue" description="N5-methylglutamine" evidence="2">
    <location>
        <position position="252"/>
    </location>
</feature>
<sequence length="371" mass="42556">MELSEIKRNIDEYRNNLAQIRGSLDFENKETNIQEYEEMMTEPDFWDDQNKAQDVIDKNNALKSVVNGYHELEEEVEDMTATWELLQEELDGDVKSDLEQNVLDFKEKVDQFELQLLLDGPHDANNAILELHPGAGGTESQDWASMLLRMYQRYGEQQGFKVETVDYLPGDEAGVKSVTLLIKGHNAYGYLKAEKGVHRLVRISPFDSSGRRHTSFASCDVIPEFNNDEIEIEINPDDITVDTFRASGAGGQHINKTESAIRITHHPTGIVVNNQNERSQIKNREAAMKMLKAKLYQLKLEEQEREMAEIRGEQKEIGWGSQIRSYVFHPYSMVKDHRTNEETGKVDAVMDGEIGPFIESYLRYTMNQSDN</sequence>
<dbReference type="EMBL" id="AP006716">
    <property type="protein sequence ID" value="BAE05446.1"/>
    <property type="status" value="ALT_SEQ"/>
    <property type="molecule type" value="Genomic_DNA"/>
</dbReference>
<dbReference type="SMR" id="Q4L4H9"/>
<dbReference type="KEGG" id="sha:SH2137"/>
<dbReference type="eggNOG" id="COG1186">
    <property type="taxonomic scope" value="Bacteria"/>
</dbReference>
<dbReference type="HOGENOM" id="CLU_036856_6_0_9"/>
<dbReference type="OrthoDB" id="9806673at2"/>
<dbReference type="Proteomes" id="UP000000543">
    <property type="component" value="Chromosome"/>
</dbReference>
<dbReference type="GO" id="GO:0005737">
    <property type="term" value="C:cytoplasm"/>
    <property type="evidence" value="ECO:0007669"/>
    <property type="project" value="UniProtKB-SubCell"/>
</dbReference>
<dbReference type="GO" id="GO:0016149">
    <property type="term" value="F:translation release factor activity, codon specific"/>
    <property type="evidence" value="ECO:0007669"/>
    <property type="project" value="UniProtKB-UniRule"/>
</dbReference>
<dbReference type="GO" id="GO:0075523">
    <property type="term" value="P:viral translational frameshifting"/>
    <property type="evidence" value="ECO:0007669"/>
    <property type="project" value="UniProtKB-KW"/>
</dbReference>
<dbReference type="FunFam" id="3.30.160.20:FF:000010">
    <property type="entry name" value="Peptide chain release factor 2"/>
    <property type="match status" value="1"/>
</dbReference>
<dbReference type="Gene3D" id="3.30.160.20">
    <property type="match status" value="1"/>
</dbReference>
<dbReference type="Gene3D" id="3.30.70.1660">
    <property type="match status" value="1"/>
</dbReference>
<dbReference type="Gene3D" id="1.20.58.410">
    <property type="entry name" value="Release factor"/>
    <property type="match status" value="1"/>
</dbReference>
<dbReference type="HAMAP" id="MF_00094">
    <property type="entry name" value="Rel_fac_2"/>
    <property type="match status" value="1"/>
</dbReference>
<dbReference type="InterPro" id="IPR005139">
    <property type="entry name" value="PCRF"/>
</dbReference>
<dbReference type="InterPro" id="IPR000352">
    <property type="entry name" value="Pep_chain_release_fac_I"/>
</dbReference>
<dbReference type="InterPro" id="IPR045853">
    <property type="entry name" value="Pep_chain_release_fac_I_sf"/>
</dbReference>
<dbReference type="InterPro" id="IPR004374">
    <property type="entry name" value="PrfB"/>
</dbReference>
<dbReference type="NCBIfam" id="TIGR00020">
    <property type="entry name" value="prfB"/>
    <property type="match status" value="1"/>
</dbReference>
<dbReference type="PANTHER" id="PTHR43116:SF3">
    <property type="entry name" value="CLASS I PEPTIDE CHAIN RELEASE FACTOR"/>
    <property type="match status" value="1"/>
</dbReference>
<dbReference type="PANTHER" id="PTHR43116">
    <property type="entry name" value="PEPTIDE CHAIN RELEASE FACTOR 2"/>
    <property type="match status" value="1"/>
</dbReference>
<dbReference type="Pfam" id="PF03462">
    <property type="entry name" value="PCRF"/>
    <property type="match status" value="1"/>
</dbReference>
<dbReference type="Pfam" id="PF00472">
    <property type="entry name" value="RF-1"/>
    <property type="match status" value="1"/>
</dbReference>
<dbReference type="SMART" id="SM00937">
    <property type="entry name" value="PCRF"/>
    <property type="match status" value="1"/>
</dbReference>
<dbReference type="SUPFAM" id="SSF75620">
    <property type="entry name" value="Release factor"/>
    <property type="match status" value="1"/>
</dbReference>
<dbReference type="PROSITE" id="PS00745">
    <property type="entry name" value="RF_PROK_I"/>
    <property type="match status" value="1"/>
</dbReference>
<proteinExistence type="inferred from homology"/>
<keyword id="KW-0963">Cytoplasm</keyword>
<keyword id="KW-0488">Methylation</keyword>
<keyword id="KW-0648">Protein biosynthesis</keyword>
<keyword id="KW-0688">Ribosomal frameshifting</keyword>
<reference key="1">
    <citation type="journal article" date="2005" name="J. Bacteriol.">
        <title>Whole-genome sequencing of Staphylococcus haemolyticus uncovers the extreme plasticity of its genome and the evolution of human-colonizing staphylococcal species.</title>
        <authorList>
            <person name="Takeuchi F."/>
            <person name="Watanabe S."/>
            <person name="Baba T."/>
            <person name="Yuzawa H."/>
            <person name="Ito T."/>
            <person name="Morimoto Y."/>
            <person name="Kuroda M."/>
            <person name="Cui L."/>
            <person name="Takahashi M."/>
            <person name="Ankai A."/>
            <person name="Baba S."/>
            <person name="Fukui S."/>
            <person name="Lee J.C."/>
            <person name="Hiramatsu K."/>
        </authorList>
    </citation>
    <scope>NUCLEOTIDE SEQUENCE [LARGE SCALE GENOMIC DNA]</scope>
    <source>
        <strain>JCSC1435</strain>
    </source>
</reference>
<gene>
    <name evidence="2" type="primary">prfB</name>
    <name type="ordered locus">SH2137</name>
</gene>
<evidence type="ECO:0000250" key="1"/>
<evidence type="ECO:0000255" key="2">
    <source>
        <dbReference type="HAMAP-Rule" id="MF_00094"/>
    </source>
</evidence>
<name>RF2_STAHJ</name>
<accession>Q4L4H9</accession>